<name>OBG_ECO24</name>
<comment type="function">
    <text evidence="1">An essential GTPase which binds GTP, GDP and possibly (p)ppGpp with moderate affinity, with high nucleotide exchange rates and a fairly low GTP hydrolysis rate. Plays a role in control of the cell cycle, stress response, ribosome biogenesis and in those bacteria that undergo differentiation, in morphogenesis control.</text>
</comment>
<comment type="cofactor">
    <cofactor evidence="1">
        <name>Mg(2+)</name>
        <dbReference type="ChEBI" id="CHEBI:18420"/>
    </cofactor>
</comment>
<comment type="subunit">
    <text evidence="1">Monomer.</text>
</comment>
<comment type="subcellular location">
    <subcellularLocation>
        <location evidence="1">Cytoplasm</location>
    </subcellularLocation>
</comment>
<comment type="similarity">
    <text evidence="1">Belongs to the TRAFAC class OBG-HflX-like GTPase superfamily. OBG GTPase family.</text>
</comment>
<feature type="chain" id="PRO_0000385917" description="GTPase Obg">
    <location>
        <begin position="1"/>
        <end position="390"/>
    </location>
</feature>
<feature type="domain" description="Obg" evidence="2">
    <location>
        <begin position="1"/>
        <end position="159"/>
    </location>
</feature>
<feature type="domain" description="OBG-type G" evidence="1">
    <location>
        <begin position="160"/>
        <end position="333"/>
    </location>
</feature>
<feature type="region of interest" description="Disordered" evidence="3">
    <location>
        <begin position="127"/>
        <end position="147"/>
    </location>
</feature>
<feature type="compositionally biased region" description="Polar residues" evidence="3">
    <location>
        <begin position="129"/>
        <end position="145"/>
    </location>
</feature>
<feature type="binding site" evidence="1">
    <location>
        <begin position="166"/>
        <end position="173"/>
    </location>
    <ligand>
        <name>GTP</name>
        <dbReference type="ChEBI" id="CHEBI:37565"/>
    </ligand>
</feature>
<feature type="binding site" evidence="1">
    <location>
        <position position="173"/>
    </location>
    <ligand>
        <name>Mg(2+)</name>
        <dbReference type="ChEBI" id="CHEBI:18420"/>
    </ligand>
</feature>
<feature type="binding site" evidence="1">
    <location>
        <begin position="191"/>
        <end position="195"/>
    </location>
    <ligand>
        <name>GTP</name>
        <dbReference type="ChEBI" id="CHEBI:37565"/>
    </ligand>
</feature>
<feature type="binding site" evidence="1">
    <location>
        <position position="193"/>
    </location>
    <ligand>
        <name>Mg(2+)</name>
        <dbReference type="ChEBI" id="CHEBI:18420"/>
    </ligand>
</feature>
<feature type="binding site" evidence="1">
    <location>
        <begin position="213"/>
        <end position="216"/>
    </location>
    <ligand>
        <name>GTP</name>
        <dbReference type="ChEBI" id="CHEBI:37565"/>
    </ligand>
</feature>
<feature type="binding site" evidence="1">
    <location>
        <begin position="283"/>
        <end position="286"/>
    </location>
    <ligand>
        <name>GTP</name>
        <dbReference type="ChEBI" id="CHEBI:37565"/>
    </ligand>
</feature>
<feature type="binding site" evidence="1">
    <location>
        <begin position="314"/>
        <end position="316"/>
    </location>
    <ligand>
        <name>GTP</name>
        <dbReference type="ChEBI" id="CHEBI:37565"/>
    </ligand>
</feature>
<evidence type="ECO:0000255" key="1">
    <source>
        <dbReference type="HAMAP-Rule" id="MF_01454"/>
    </source>
</evidence>
<evidence type="ECO:0000255" key="2">
    <source>
        <dbReference type="PROSITE-ProRule" id="PRU01231"/>
    </source>
</evidence>
<evidence type="ECO:0000256" key="3">
    <source>
        <dbReference type="SAM" id="MobiDB-lite"/>
    </source>
</evidence>
<dbReference type="EC" id="3.6.5.-" evidence="1"/>
<dbReference type="EMBL" id="CP000800">
    <property type="protein sequence ID" value="ABV17263.1"/>
    <property type="molecule type" value="Genomic_DNA"/>
</dbReference>
<dbReference type="SMR" id="A7ZS79"/>
<dbReference type="KEGG" id="ecw:EcE24377A_3668"/>
<dbReference type="HOGENOM" id="CLU_011747_2_0_6"/>
<dbReference type="Proteomes" id="UP000001122">
    <property type="component" value="Chromosome"/>
</dbReference>
<dbReference type="GO" id="GO:0005737">
    <property type="term" value="C:cytoplasm"/>
    <property type="evidence" value="ECO:0007669"/>
    <property type="project" value="UniProtKB-SubCell"/>
</dbReference>
<dbReference type="GO" id="GO:0005525">
    <property type="term" value="F:GTP binding"/>
    <property type="evidence" value="ECO:0007669"/>
    <property type="project" value="UniProtKB-UniRule"/>
</dbReference>
<dbReference type="GO" id="GO:0003924">
    <property type="term" value="F:GTPase activity"/>
    <property type="evidence" value="ECO:0007669"/>
    <property type="project" value="UniProtKB-UniRule"/>
</dbReference>
<dbReference type="GO" id="GO:0000287">
    <property type="term" value="F:magnesium ion binding"/>
    <property type="evidence" value="ECO:0007669"/>
    <property type="project" value="InterPro"/>
</dbReference>
<dbReference type="GO" id="GO:0042254">
    <property type="term" value="P:ribosome biogenesis"/>
    <property type="evidence" value="ECO:0007669"/>
    <property type="project" value="UniProtKB-UniRule"/>
</dbReference>
<dbReference type="CDD" id="cd01898">
    <property type="entry name" value="Obg"/>
    <property type="match status" value="1"/>
</dbReference>
<dbReference type="FunFam" id="2.70.210.12:FF:000001">
    <property type="entry name" value="GTPase Obg"/>
    <property type="match status" value="1"/>
</dbReference>
<dbReference type="FunFam" id="3.40.50.300:FF:000185">
    <property type="entry name" value="GTPase Obg"/>
    <property type="match status" value="1"/>
</dbReference>
<dbReference type="Gene3D" id="2.70.210.12">
    <property type="entry name" value="GTP1/OBG domain"/>
    <property type="match status" value="1"/>
</dbReference>
<dbReference type="Gene3D" id="3.40.50.300">
    <property type="entry name" value="P-loop containing nucleotide triphosphate hydrolases"/>
    <property type="match status" value="1"/>
</dbReference>
<dbReference type="HAMAP" id="MF_01454">
    <property type="entry name" value="GTPase_Obg"/>
    <property type="match status" value="1"/>
</dbReference>
<dbReference type="InterPro" id="IPR031167">
    <property type="entry name" value="G_OBG"/>
</dbReference>
<dbReference type="InterPro" id="IPR006073">
    <property type="entry name" value="GTP-bd"/>
</dbReference>
<dbReference type="InterPro" id="IPR014100">
    <property type="entry name" value="GTP-bd_Obg/CgtA"/>
</dbReference>
<dbReference type="InterPro" id="IPR006074">
    <property type="entry name" value="GTP1-OBG_CS"/>
</dbReference>
<dbReference type="InterPro" id="IPR006169">
    <property type="entry name" value="GTP1_OBG_dom"/>
</dbReference>
<dbReference type="InterPro" id="IPR036726">
    <property type="entry name" value="GTP1_OBG_dom_sf"/>
</dbReference>
<dbReference type="InterPro" id="IPR045086">
    <property type="entry name" value="OBG_GTPase"/>
</dbReference>
<dbReference type="InterPro" id="IPR027417">
    <property type="entry name" value="P-loop_NTPase"/>
</dbReference>
<dbReference type="NCBIfam" id="TIGR02729">
    <property type="entry name" value="Obg_CgtA"/>
    <property type="match status" value="1"/>
</dbReference>
<dbReference type="NCBIfam" id="NF008955">
    <property type="entry name" value="PRK12297.1"/>
    <property type="match status" value="1"/>
</dbReference>
<dbReference type="NCBIfam" id="NF008956">
    <property type="entry name" value="PRK12299.1"/>
    <property type="match status" value="1"/>
</dbReference>
<dbReference type="PANTHER" id="PTHR11702">
    <property type="entry name" value="DEVELOPMENTALLY REGULATED GTP-BINDING PROTEIN-RELATED"/>
    <property type="match status" value="1"/>
</dbReference>
<dbReference type="PANTHER" id="PTHR11702:SF31">
    <property type="entry name" value="MITOCHONDRIAL RIBOSOME-ASSOCIATED GTPASE 2"/>
    <property type="match status" value="1"/>
</dbReference>
<dbReference type="Pfam" id="PF01018">
    <property type="entry name" value="GTP1_OBG"/>
    <property type="match status" value="1"/>
</dbReference>
<dbReference type="Pfam" id="PF01926">
    <property type="entry name" value="MMR_HSR1"/>
    <property type="match status" value="1"/>
</dbReference>
<dbReference type="PIRSF" id="PIRSF002401">
    <property type="entry name" value="GTP_bd_Obg/CgtA"/>
    <property type="match status" value="1"/>
</dbReference>
<dbReference type="PRINTS" id="PR00326">
    <property type="entry name" value="GTP1OBG"/>
</dbReference>
<dbReference type="SUPFAM" id="SSF82051">
    <property type="entry name" value="Obg GTP-binding protein N-terminal domain"/>
    <property type="match status" value="1"/>
</dbReference>
<dbReference type="SUPFAM" id="SSF52540">
    <property type="entry name" value="P-loop containing nucleoside triphosphate hydrolases"/>
    <property type="match status" value="1"/>
</dbReference>
<dbReference type="PROSITE" id="PS51710">
    <property type="entry name" value="G_OBG"/>
    <property type="match status" value="1"/>
</dbReference>
<dbReference type="PROSITE" id="PS00905">
    <property type="entry name" value="GTP1_OBG"/>
    <property type="match status" value="1"/>
</dbReference>
<dbReference type="PROSITE" id="PS51883">
    <property type="entry name" value="OBG"/>
    <property type="match status" value="1"/>
</dbReference>
<protein>
    <recommendedName>
        <fullName evidence="1">GTPase Obg</fullName>
        <ecNumber evidence="1">3.6.5.-</ecNumber>
    </recommendedName>
    <alternativeName>
        <fullName evidence="1">GTP-binding protein Obg</fullName>
    </alternativeName>
</protein>
<organism>
    <name type="scientific">Escherichia coli O139:H28 (strain E24377A / ETEC)</name>
    <dbReference type="NCBI Taxonomy" id="331111"/>
    <lineage>
        <taxon>Bacteria</taxon>
        <taxon>Pseudomonadati</taxon>
        <taxon>Pseudomonadota</taxon>
        <taxon>Gammaproteobacteria</taxon>
        <taxon>Enterobacterales</taxon>
        <taxon>Enterobacteriaceae</taxon>
        <taxon>Escherichia</taxon>
    </lineage>
</organism>
<sequence>MKFVDEASILVVAGDGGNGCVSFRREKYIPKGGPDGGDGGDGGDVWMEADENLNTLIDYRFEKSFRAERGQNGASRDCTGKRGKDVTIKVPVGTRVIDQGTGETMGDMTKHGQRLLVAKGGWHGLGNTRFKSSVNRTPRQKTNGTPGDKRELLLELMLLADVGMLGMPNAGKSTFIRAVSAAKPKVADYPFTTLVPSLGVVRMDNEKSFVVADIPGLIEGAAEGAGLGIRFLKHLERCRVLLHLIDIDPIDGTDPVENARIIISELEKYSQDLAAKPRWLVFNKIDLLDKAEAEEKAKAIAEALGWEDKYYLISAASGLGVKDLCWDVMTFIIENPVVQAEEAKQPEKVEFMWDDYHRQQLEEIAEEDDEDWDDDWDEDDEEGVEFIYKR</sequence>
<accession>A7ZS79</accession>
<reference key="1">
    <citation type="journal article" date="2008" name="J. Bacteriol.">
        <title>The pangenome structure of Escherichia coli: comparative genomic analysis of E. coli commensal and pathogenic isolates.</title>
        <authorList>
            <person name="Rasko D.A."/>
            <person name="Rosovitz M.J."/>
            <person name="Myers G.S.A."/>
            <person name="Mongodin E.F."/>
            <person name="Fricke W.F."/>
            <person name="Gajer P."/>
            <person name="Crabtree J."/>
            <person name="Sebaihia M."/>
            <person name="Thomson N.R."/>
            <person name="Chaudhuri R."/>
            <person name="Henderson I.R."/>
            <person name="Sperandio V."/>
            <person name="Ravel J."/>
        </authorList>
    </citation>
    <scope>NUCLEOTIDE SEQUENCE [LARGE SCALE GENOMIC DNA]</scope>
    <source>
        <strain>E24377A / ETEC</strain>
    </source>
</reference>
<proteinExistence type="inferred from homology"/>
<keyword id="KW-0963">Cytoplasm</keyword>
<keyword id="KW-0342">GTP-binding</keyword>
<keyword id="KW-0378">Hydrolase</keyword>
<keyword id="KW-0460">Magnesium</keyword>
<keyword id="KW-0479">Metal-binding</keyword>
<keyword id="KW-0547">Nucleotide-binding</keyword>
<keyword id="KW-1185">Reference proteome</keyword>
<gene>
    <name evidence="1" type="primary">obg</name>
    <name type="ordered locus">EcE24377A_3668</name>
</gene>